<organism>
    <name type="scientific">Penicillium roqueforti (strain FM164)</name>
    <dbReference type="NCBI Taxonomy" id="1365484"/>
    <lineage>
        <taxon>Eukaryota</taxon>
        <taxon>Fungi</taxon>
        <taxon>Dikarya</taxon>
        <taxon>Ascomycota</taxon>
        <taxon>Pezizomycotina</taxon>
        <taxon>Eurotiomycetes</taxon>
        <taxon>Eurotiomycetidae</taxon>
        <taxon>Eurotiales</taxon>
        <taxon>Aspergillaceae</taxon>
        <taxon>Penicillium</taxon>
    </lineage>
</organism>
<sequence>MFFSQPTHLAKAEELKQAPPKGVAYSVALPGTEQPGRSPVYRAWNAQKELLTTLDPEVTTAHDIFESTAIRHPKNDCLGWRPYNSTTKSFDPYQWLTYETVQKRRAAFGAGIVELHHKHDCHRPGQYGVGLWSQNRPEWQITDLACVSQSLYSVSIYDVLSEDATEYIINHSELSCVVTSLPHIASLIKLKPSLPTLKIIISLDPLDGGEQAGHSKRAIFESMAAGLGLAIYTIDQVEELGLASKRGYNPPSASDIVTINYTSGTTGPPKGVVLTHGNAVAATSCGLITISQARGDTSASYLPLAHIYARLAEHTAFWGAARIGYFHGNIAELVDDLKLLKPTGFMSVPRLYSRFGSAIRAATVEQPGFKGALSRHIIAAKTANMKNPDPSKATVRHALYDRIWAKKVTAALGLERARYMVSGSAPLDPTLHNFLRVATGTDVLQGYGLTESYASATAQPVYDLTAGNCGSLAPCVEACLVSLPDMEYSVDDKPFPRGELLLRGNNMFREYYKNEEETRSAITEDGWFRTGDVCTIDEKGRFIIIDRRKNVLKLAQGEYISPERLEGVVLSELGYIAQAYVHGDSLQTFLVGIFGVAPDLFAPYASKVLGRTIAPTDLEAVKESLNDDKVRRAVLRDLERVAKKHKFAGYERIRNVSLKVEPFTVENNLLTPTLKLKRPPTVKVYRSLLDQLYEQAVEEQSAPKAKL</sequence>
<keyword id="KW-0067">ATP-binding</keyword>
<keyword id="KW-0436">Ligase</keyword>
<keyword id="KW-0547">Nucleotide-binding</keyword>
<keyword id="KW-0576">Peroxisome</keyword>
<keyword id="KW-1185">Reference proteome</keyword>
<dbReference type="EC" id="6.2.1.-" evidence="1"/>
<dbReference type="EMBL" id="HG792018">
    <property type="protein sequence ID" value="CDM35642.1"/>
    <property type="molecule type" value="Genomic_DNA"/>
</dbReference>
<dbReference type="SMR" id="W6R1D9"/>
<dbReference type="STRING" id="1365484.W6R1D9"/>
<dbReference type="OMA" id="KCPIVEH"/>
<dbReference type="OrthoDB" id="1700726at2759"/>
<dbReference type="UniPathway" id="UPA00213"/>
<dbReference type="Proteomes" id="UP000030686">
    <property type="component" value="Unassembled WGS sequence"/>
</dbReference>
<dbReference type="GO" id="GO:0005783">
    <property type="term" value="C:endoplasmic reticulum"/>
    <property type="evidence" value="ECO:0007669"/>
    <property type="project" value="TreeGrafter"/>
</dbReference>
<dbReference type="GO" id="GO:0016020">
    <property type="term" value="C:membrane"/>
    <property type="evidence" value="ECO:0007669"/>
    <property type="project" value="TreeGrafter"/>
</dbReference>
<dbReference type="GO" id="GO:0005782">
    <property type="term" value="C:peroxisomal matrix"/>
    <property type="evidence" value="ECO:0000250"/>
    <property type="project" value="GO_Central"/>
</dbReference>
<dbReference type="GO" id="GO:0005524">
    <property type="term" value="F:ATP binding"/>
    <property type="evidence" value="ECO:0007669"/>
    <property type="project" value="UniProtKB-KW"/>
</dbReference>
<dbReference type="GO" id="GO:0016874">
    <property type="term" value="F:ligase activity"/>
    <property type="evidence" value="ECO:0000250"/>
    <property type="project" value="GO_Central"/>
</dbReference>
<dbReference type="GO" id="GO:0004467">
    <property type="term" value="F:long-chain fatty acid-CoA ligase activity"/>
    <property type="evidence" value="ECO:0007669"/>
    <property type="project" value="TreeGrafter"/>
</dbReference>
<dbReference type="GO" id="GO:0140722">
    <property type="term" value="P:mycophenolic acid biosynthetic process"/>
    <property type="evidence" value="ECO:0000250"/>
    <property type="project" value="GO_Central"/>
</dbReference>
<dbReference type="GO" id="GO:0016114">
    <property type="term" value="P:terpenoid biosynthetic process"/>
    <property type="evidence" value="ECO:0007669"/>
    <property type="project" value="UniProtKB-UniPathway"/>
</dbReference>
<dbReference type="Gene3D" id="3.40.50.12780">
    <property type="entry name" value="N-terminal domain of ligase-like"/>
    <property type="match status" value="1"/>
</dbReference>
<dbReference type="InterPro" id="IPR020845">
    <property type="entry name" value="AMP-binding_CS"/>
</dbReference>
<dbReference type="InterPro" id="IPR000873">
    <property type="entry name" value="AMP-dep_synth/lig_dom"/>
</dbReference>
<dbReference type="InterPro" id="IPR042099">
    <property type="entry name" value="ANL_N_sf"/>
</dbReference>
<dbReference type="PANTHER" id="PTHR43272:SF33">
    <property type="entry name" value="AMP-BINDING DOMAIN-CONTAINING PROTEIN-RELATED"/>
    <property type="match status" value="1"/>
</dbReference>
<dbReference type="PANTHER" id="PTHR43272">
    <property type="entry name" value="LONG-CHAIN-FATTY-ACID--COA LIGASE"/>
    <property type="match status" value="1"/>
</dbReference>
<dbReference type="Pfam" id="PF00501">
    <property type="entry name" value="AMP-binding"/>
    <property type="match status" value="1"/>
</dbReference>
<dbReference type="SUPFAM" id="SSF56801">
    <property type="entry name" value="Acetyl-CoA synthetase-like"/>
    <property type="match status" value="1"/>
</dbReference>
<dbReference type="PROSITE" id="PS00455">
    <property type="entry name" value="AMP_BINDING"/>
    <property type="match status" value="1"/>
</dbReference>
<protein>
    <recommendedName>
        <fullName evidence="1">Acyl-CoA ligase 891, peroxisomal</fullName>
        <shortName evidence="1">ACL891</shortName>
        <ecNumber evidence="1">6.2.1.-</ecNumber>
    </recommendedName>
</protein>
<evidence type="ECO:0000250" key="1">
    <source>
        <dbReference type="UniProtKB" id="P9WEY3"/>
    </source>
</evidence>
<evidence type="ECO:0000255" key="2"/>
<evidence type="ECO:0000305" key="3"/>
<proteinExistence type="inferred from homology"/>
<feature type="chain" id="PRO_0000451897" description="Acyl-CoA ligase 891, peroxisomal">
    <location>
        <begin position="1"/>
        <end position="707"/>
    </location>
</feature>
<feature type="region of interest" description="Fatty acid-binding" evidence="2">
    <location>
        <begin position="525"/>
        <end position="549"/>
    </location>
</feature>
<feature type="short sequence motif" description="Peroxisome targeting signal" evidence="1">
    <location>
        <begin position="705"/>
        <end position="707"/>
    </location>
</feature>
<feature type="binding site" evidence="2">
    <location>
        <begin position="259"/>
        <end position="270"/>
    </location>
    <ligand>
        <name>ATP</name>
        <dbReference type="ChEBI" id="CHEBI:30616"/>
    </ligand>
</feature>
<gene>
    <name type="ORF">PROQFM164_S04g000523</name>
</gene>
<name>AC891_PENRF</name>
<reference key="1">
    <citation type="journal article" date="2014" name="Nat. Commun.">
        <title>Multiple recent horizontal transfers of a large genomic region in cheese making fungi.</title>
        <authorList>
            <person name="Cheeseman K."/>
            <person name="Ropars J."/>
            <person name="Renault P."/>
            <person name="Dupont J."/>
            <person name="Gouzy J."/>
            <person name="Branca A."/>
            <person name="Abraham A.-L."/>
            <person name="Ceppi M."/>
            <person name="Conseiller E."/>
            <person name="Debuchy R."/>
            <person name="Malagnac F."/>
            <person name="Goarin A."/>
            <person name="Silar P."/>
            <person name="Lacoste S."/>
            <person name="Sallet E."/>
            <person name="Bensimon A."/>
            <person name="Giraud T."/>
            <person name="Brygoo Y."/>
        </authorList>
    </citation>
    <scope>NUCLEOTIDE SEQUENCE [LARGE SCALE GENOMIC DNA]</scope>
    <source>
        <strain>FM164</strain>
    </source>
</reference>
<comment type="function">
    <text evidence="1">Acyl-CoA ligase involved in the biosynthesis of mycophenolic acid (MPA), the first isolated antibiotic natural product in the world obtained from a culture of Penicillium brevicompactum in 1893 (By similarity). The peroxisomal acyl-CoA ligase 891 converts the intermediate MFDHMP-3C into MFDHMP-3C-CoA which impairs its diffusion from the peroxisome (By similarity). The first step of the pathway is the synthesis of 5-methylorsellinic acid (5MOA) by the cytosolic polyketide synthase mpaC. 5MOA is then converted to the phthalide compound 5,7-dihydroxy-4,6-dimethylphthalide (DHMP) by the endoplasmic reticulum-bound cytochrome P450 monooxygenase mpaDE. MpaDE first catalyzes hydroxylation of 5-MOA to 4,6-dihydroxy-2-(hydroxymethyl)-3-methylbenzoic acid (DHMB). MpaDE then acts as a lactone synthase that catalyzes the ring closure to convert DHMB into DHMP. The next step is the prenylation of DHMP by the Golgi apparatus-associated prenyltransferase mpaA to yield farnesyl-DHMP (FDHMP). The ER-bound oxygenase mpaB then mediates the oxidative cleavage the C19-C20 double bond in FDHMP to yield FDHMP-3C via a mycophenolic aldehyde intermediate. The O-methyltransferase mpaG catalyzes the methylation of FDHMP-3C to yield MFDHMP-3C. After the cytosolic methylation of FDHMP-3C, MFDHMP-3C enters into peroxisomes probably via free diffusion due to its low molecular weight. Upon a peroxisomal CoA ligation reaction, catalyzed by a beta-oxidation component enzyme acyl-CoA ligase ACL891, MFDHMP-3C-CoA would then be restricted to peroxisomes for the following beta-oxidation pathway steps. The peroxisomal beta-oxidation machinery than converts MFDHMP-3C-CoA into MPA_CoA, via a beta-oxidation chain-shortening process. Finally mpaH acts as a peroxisomal acyl-CoA hydrolase with high substrate specificity toward MPA-CoA to release the final product MPA (By similarity).</text>
</comment>
<comment type="catalytic activity">
    <reaction evidence="1">
        <text>(4E,8E)-10-(4-hydroxy-6-methoxy-7-methyl-3-oxo-1,3-dihydro-2-benzofuran-5-yl)-4,8-dimethyldeca-4,8-dienoate + ATP + CoA = (4E,8E)-10-(4-hydroxy-6-methoxy-7-methyl-3-oxo-1,3-dihydro-2-benzofuran-5-yl)-4,8-dimethyldeca-4,8-dienoyl-CoA + AMP + diphosphate</text>
        <dbReference type="Rhea" id="RHEA:66700"/>
        <dbReference type="ChEBI" id="CHEBI:30616"/>
        <dbReference type="ChEBI" id="CHEBI:33019"/>
        <dbReference type="ChEBI" id="CHEBI:57287"/>
        <dbReference type="ChEBI" id="CHEBI:167390"/>
        <dbReference type="ChEBI" id="CHEBI:167446"/>
        <dbReference type="ChEBI" id="CHEBI:456215"/>
    </reaction>
    <physiologicalReaction direction="left-to-right" evidence="1">
        <dbReference type="Rhea" id="RHEA:66701"/>
    </physiologicalReaction>
</comment>
<comment type="pathway">
    <text evidence="1">Secondary metabolite biosynthesis; terpenoid biosynthesis.</text>
</comment>
<comment type="subcellular location">
    <subcellularLocation>
        <location evidence="1">Peroxisome matrix</location>
    </subcellularLocation>
</comment>
<comment type="similarity">
    <text evidence="3">Belongs to the ATP-dependent AMP-binding enzyme family.</text>
</comment>
<accession>W6R1D9</accession>